<gene>
    <name type="primary">RPS25E</name>
    <name type="ordered locus">At4g39200</name>
    <name type="ORF">T22F8.100</name>
</gene>
<proteinExistence type="inferred from homology"/>
<accession>Q9T029</accession>
<organism>
    <name type="scientific">Arabidopsis thaliana</name>
    <name type="common">Mouse-ear cress</name>
    <dbReference type="NCBI Taxonomy" id="3702"/>
    <lineage>
        <taxon>Eukaryota</taxon>
        <taxon>Viridiplantae</taxon>
        <taxon>Streptophyta</taxon>
        <taxon>Embryophyta</taxon>
        <taxon>Tracheophyta</taxon>
        <taxon>Spermatophyta</taxon>
        <taxon>Magnoliopsida</taxon>
        <taxon>eudicotyledons</taxon>
        <taxon>Gunneridae</taxon>
        <taxon>Pentapetalae</taxon>
        <taxon>rosids</taxon>
        <taxon>malvids</taxon>
        <taxon>Brassicales</taxon>
        <taxon>Brassicaceae</taxon>
        <taxon>Camelineae</taxon>
        <taxon>Arabidopsis</taxon>
    </lineage>
</organism>
<protein>
    <recommendedName>
        <fullName evidence="2">Small ribosomal subunit protein eS25w</fullName>
    </recommendedName>
    <alternativeName>
        <fullName>40S ribosomal protein S25-4</fullName>
    </alternativeName>
</protein>
<comment type="alternative products">
    <event type="alternative splicing"/>
    <isoform>
        <id>Q9T029-1</id>
        <name>1</name>
        <sequence type="displayed"/>
    </isoform>
    <text>A number of isoforms are produced. According to EST sequences.</text>
</comment>
<comment type="similarity">
    <text evidence="3">Belongs to the eukaryotic ribosomal protein eS25 family.</text>
</comment>
<reference key="1">
    <citation type="journal article" date="1999" name="Nature">
        <title>Sequence and analysis of chromosome 4 of the plant Arabidopsis thaliana.</title>
        <authorList>
            <person name="Mayer K.F.X."/>
            <person name="Schueller C."/>
            <person name="Wambutt R."/>
            <person name="Murphy G."/>
            <person name="Volckaert G."/>
            <person name="Pohl T."/>
            <person name="Duesterhoeft A."/>
            <person name="Stiekema W."/>
            <person name="Entian K.-D."/>
            <person name="Terryn N."/>
            <person name="Harris B."/>
            <person name="Ansorge W."/>
            <person name="Brandt P."/>
            <person name="Grivell L.A."/>
            <person name="Rieger M."/>
            <person name="Weichselgartner M."/>
            <person name="de Simone V."/>
            <person name="Obermaier B."/>
            <person name="Mache R."/>
            <person name="Mueller M."/>
            <person name="Kreis M."/>
            <person name="Delseny M."/>
            <person name="Puigdomenech P."/>
            <person name="Watson M."/>
            <person name="Schmidtheini T."/>
            <person name="Reichert B."/>
            <person name="Portetelle D."/>
            <person name="Perez-Alonso M."/>
            <person name="Boutry M."/>
            <person name="Bancroft I."/>
            <person name="Vos P."/>
            <person name="Hoheisel J."/>
            <person name="Zimmermann W."/>
            <person name="Wedler H."/>
            <person name="Ridley P."/>
            <person name="Langham S.-A."/>
            <person name="McCullagh B."/>
            <person name="Bilham L."/>
            <person name="Robben J."/>
            <person name="van der Schueren J."/>
            <person name="Grymonprez B."/>
            <person name="Chuang Y.-J."/>
            <person name="Vandenbussche F."/>
            <person name="Braeken M."/>
            <person name="Weltjens I."/>
            <person name="Voet M."/>
            <person name="Bastiaens I."/>
            <person name="Aert R."/>
            <person name="Defoor E."/>
            <person name="Weitzenegger T."/>
            <person name="Bothe G."/>
            <person name="Ramsperger U."/>
            <person name="Hilbert H."/>
            <person name="Braun M."/>
            <person name="Holzer E."/>
            <person name="Brandt A."/>
            <person name="Peters S."/>
            <person name="van Staveren M."/>
            <person name="Dirkse W."/>
            <person name="Mooijman P."/>
            <person name="Klein Lankhorst R."/>
            <person name="Rose M."/>
            <person name="Hauf J."/>
            <person name="Koetter P."/>
            <person name="Berneiser S."/>
            <person name="Hempel S."/>
            <person name="Feldpausch M."/>
            <person name="Lamberth S."/>
            <person name="Van den Daele H."/>
            <person name="De Keyser A."/>
            <person name="Buysshaert C."/>
            <person name="Gielen J."/>
            <person name="Villarroel R."/>
            <person name="De Clercq R."/>
            <person name="van Montagu M."/>
            <person name="Rogers J."/>
            <person name="Cronin A."/>
            <person name="Quail M.A."/>
            <person name="Bray-Allen S."/>
            <person name="Clark L."/>
            <person name="Doggett J."/>
            <person name="Hall S."/>
            <person name="Kay M."/>
            <person name="Lennard N."/>
            <person name="McLay K."/>
            <person name="Mayes R."/>
            <person name="Pettett A."/>
            <person name="Rajandream M.A."/>
            <person name="Lyne M."/>
            <person name="Benes V."/>
            <person name="Rechmann S."/>
            <person name="Borkova D."/>
            <person name="Bloecker H."/>
            <person name="Scharfe M."/>
            <person name="Grimm M."/>
            <person name="Loehnert T.-H."/>
            <person name="Dose S."/>
            <person name="de Haan M."/>
            <person name="Maarse A.C."/>
            <person name="Schaefer M."/>
            <person name="Mueller-Auer S."/>
            <person name="Gabel C."/>
            <person name="Fuchs M."/>
            <person name="Fartmann B."/>
            <person name="Granderath K."/>
            <person name="Dauner D."/>
            <person name="Herzl A."/>
            <person name="Neumann S."/>
            <person name="Argiriou A."/>
            <person name="Vitale D."/>
            <person name="Liguori R."/>
            <person name="Piravandi E."/>
            <person name="Massenet O."/>
            <person name="Quigley F."/>
            <person name="Clabauld G."/>
            <person name="Muendlein A."/>
            <person name="Felber R."/>
            <person name="Schnabl S."/>
            <person name="Hiller R."/>
            <person name="Schmidt W."/>
            <person name="Lecharny A."/>
            <person name="Aubourg S."/>
            <person name="Chefdor F."/>
            <person name="Cooke R."/>
            <person name="Berger C."/>
            <person name="Monfort A."/>
            <person name="Casacuberta E."/>
            <person name="Gibbons T."/>
            <person name="Weber N."/>
            <person name="Vandenbol M."/>
            <person name="Bargues M."/>
            <person name="Terol J."/>
            <person name="Torres A."/>
            <person name="Perez-Perez A."/>
            <person name="Purnelle B."/>
            <person name="Bent E."/>
            <person name="Johnson S."/>
            <person name="Tacon D."/>
            <person name="Jesse T."/>
            <person name="Heijnen L."/>
            <person name="Schwarz S."/>
            <person name="Scholler P."/>
            <person name="Heber S."/>
            <person name="Francs P."/>
            <person name="Bielke C."/>
            <person name="Frishman D."/>
            <person name="Haase D."/>
            <person name="Lemcke K."/>
            <person name="Mewes H.-W."/>
            <person name="Stocker S."/>
            <person name="Zaccaria P."/>
            <person name="Bevan M."/>
            <person name="Wilson R.K."/>
            <person name="de la Bastide M."/>
            <person name="Habermann K."/>
            <person name="Parnell L."/>
            <person name="Dedhia N."/>
            <person name="Gnoj L."/>
            <person name="Schutz K."/>
            <person name="Huang E."/>
            <person name="Spiegel L."/>
            <person name="Sekhon M."/>
            <person name="Murray J."/>
            <person name="Sheet P."/>
            <person name="Cordes M."/>
            <person name="Abu-Threideh J."/>
            <person name="Stoneking T."/>
            <person name="Kalicki J."/>
            <person name="Graves T."/>
            <person name="Harmon G."/>
            <person name="Edwards J."/>
            <person name="Latreille P."/>
            <person name="Courtney L."/>
            <person name="Cloud J."/>
            <person name="Abbott A."/>
            <person name="Scott K."/>
            <person name="Johnson D."/>
            <person name="Minx P."/>
            <person name="Bentley D."/>
            <person name="Fulton B."/>
            <person name="Miller N."/>
            <person name="Greco T."/>
            <person name="Kemp K."/>
            <person name="Kramer J."/>
            <person name="Fulton L."/>
            <person name="Mardis E."/>
            <person name="Dante M."/>
            <person name="Pepin K."/>
            <person name="Hillier L.W."/>
            <person name="Nelson J."/>
            <person name="Spieth J."/>
            <person name="Ryan E."/>
            <person name="Andrews S."/>
            <person name="Geisel C."/>
            <person name="Layman D."/>
            <person name="Du H."/>
            <person name="Ali J."/>
            <person name="Berghoff A."/>
            <person name="Jones K."/>
            <person name="Drone K."/>
            <person name="Cotton M."/>
            <person name="Joshu C."/>
            <person name="Antonoiu B."/>
            <person name="Zidanic M."/>
            <person name="Strong C."/>
            <person name="Sun H."/>
            <person name="Lamar B."/>
            <person name="Yordan C."/>
            <person name="Ma P."/>
            <person name="Zhong J."/>
            <person name="Preston R."/>
            <person name="Vil D."/>
            <person name="Shekher M."/>
            <person name="Matero A."/>
            <person name="Shah R."/>
            <person name="Swaby I.K."/>
            <person name="O'Shaughnessy A."/>
            <person name="Rodriguez M."/>
            <person name="Hoffman J."/>
            <person name="Till S."/>
            <person name="Granat S."/>
            <person name="Shohdy N."/>
            <person name="Hasegawa A."/>
            <person name="Hameed A."/>
            <person name="Lodhi M."/>
            <person name="Johnson A."/>
            <person name="Chen E."/>
            <person name="Marra M.A."/>
            <person name="Martienssen R."/>
            <person name="McCombie W.R."/>
        </authorList>
    </citation>
    <scope>NUCLEOTIDE SEQUENCE [LARGE SCALE GENOMIC DNA]</scope>
    <source>
        <strain>cv. Columbia</strain>
    </source>
</reference>
<reference key="2">
    <citation type="journal article" date="2017" name="Plant J.">
        <title>Araport11: a complete reannotation of the Arabidopsis thaliana reference genome.</title>
        <authorList>
            <person name="Cheng C.Y."/>
            <person name="Krishnakumar V."/>
            <person name="Chan A.P."/>
            <person name="Thibaud-Nissen F."/>
            <person name="Schobel S."/>
            <person name="Town C.D."/>
        </authorList>
    </citation>
    <scope>GENOME REANNOTATION</scope>
    <source>
        <strain>cv. Columbia</strain>
    </source>
</reference>
<reference key="3">
    <citation type="journal article" date="2003" name="Science">
        <title>Empirical analysis of transcriptional activity in the Arabidopsis genome.</title>
        <authorList>
            <person name="Yamada K."/>
            <person name="Lim J."/>
            <person name="Dale J.M."/>
            <person name="Chen H."/>
            <person name="Shinn P."/>
            <person name="Palm C.J."/>
            <person name="Southwick A.M."/>
            <person name="Wu H.C."/>
            <person name="Kim C.J."/>
            <person name="Nguyen M."/>
            <person name="Pham P.K."/>
            <person name="Cheuk R.F."/>
            <person name="Karlin-Newmann G."/>
            <person name="Liu S.X."/>
            <person name="Lam B."/>
            <person name="Sakano H."/>
            <person name="Wu T."/>
            <person name="Yu G."/>
            <person name="Miranda M."/>
            <person name="Quach H.L."/>
            <person name="Tripp M."/>
            <person name="Chang C.H."/>
            <person name="Lee J.M."/>
            <person name="Toriumi M.J."/>
            <person name="Chan M.M."/>
            <person name="Tang C.C."/>
            <person name="Onodera C.S."/>
            <person name="Deng J.M."/>
            <person name="Akiyama K."/>
            <person name="Ansari Y."/>
            <person name="Arakawa T."/>
            <person name="Banh J."/>
            <person name="Banno F."/>
            <person name="Bowser L."/>
            <person name="Brooks S.Y."/>
            <person name="Carninci P."/>
            <person name="Chao Q."/>
            <person name="Choy N."/>
            <person name="Enju A."/>
            <person name="Goldsmith A.D."/>
            <person name="Gurjal M."/>
            <person name="Hansen N.F."/>
            <person name="Hayashizaki Y."/>
            <person name="Johnson-Hopson C."/>
            <person name="Hsuan V.W."/>
            <person name="Iida K."/>
            <person name="Karnes M."/>
            <person name="Khan S."/>
            <person name="Koesema E."/>
            <person name="Ishida J."/>
            <person name="Jiang P.X."/>
            <person name="Jones T."/>
            <person name="Kawai J."/>
            <person name="Kamiya A."/>
            <person name="Meyers C."/>
            <person name="Nakajima M."/>
            <person name="Narusaka M."/>
            <person name="Seki M."/>
            <person name="Sakurai T."/>
            <person name="Satou M."/>
            <person name="Tamse R."/>
            <person name="Vaysberg M."/>
            <person name="Wallender E.K."/>
            <person name="Wong C."/>
            <person name="Yamamura Y."/>
            <person name="Yuan S."/>
            <person name="Shinozaki K."/>
            <person name="Davis R.W."/>
            <person name="Theologis A."/>
            <person name="Ecker J.R."/>
        </authorList>
    </citation>
    <scope>NUCLEOTIDE SEQUENCE [LARGE SCALE MRNA]</scope>
    <source>
        <strain>cv. Columbia</strain>
    </source>
</reference>
<reference key="4">
    <citation type="submission" date="2002-03" db="EMBL/GenBank/DDBJ databases">
        <title>Full-length cDNA from Arabidopsis thaliana.</title>
        <authorList>
            <person name="Brover V.V."/>
            <person name="Troukhan M.E."/>
            <person name="Alexandrov N.A."/>
            <person name="Lu Y.-P."/>
            <person name="Flavell R.B."/>
            <person name="Feldmann K.A."/>
        </authorList>
    </citation>
    <scope>NUCLEOTIDE SEQUENCE [LARGE SCALE MRNA]</scope>
</reference>
<reference key="5">
    <citation type="journal article" date="2001" name="Plant Physiol.">
        <title>The organization of cytoplasmic ribosomal protein genes in the Arabidopsis genome.</title>
        <authorList>
            <person name="Barakat A."/>
            <person name="Szick-Miranda K."/>
            <person name="Chang I.-F."/>
            <person name="Guyot R."/>
            <person name="Blanc G."/>
            <person name="Cooke R."/>
            <person name="Delseny M."/>
            <person name="Bailey-Serres J."/>
        </authorList>
    </citation>
    <scope>GENE FAMILY ORGANIZATION</scope>
    <scope>NOMENCLATURE</scope>
</reference>
<reference key="6">
    <citation type="journal article" date="2023" name="Plant Cell">
        <title>An updated nomenclature for plant ribosomal protein genes.</title>
        <authorList>
            <person name="Scarpin M.R."/>
            <person name="Busche M."/>
            <person name="Martinez R.E."/>
            <person name="Harper L.C."/>
            <person name="Reiser L."/>
            <person name="Szakonyi D."/>
            <person name="Merchante C."/>
            <person name="Lan T."/>
            <person name="Xiong W."/>
            <person name="Mo B."/>
            <person name="Tang G."/>
            <person name="Chen X."/>
            <person name="Bailey-Serres J."/>
            <person name="Browning K.S."/>
            <person name="Brunkard J.O."/>
        </authorList>
    </citation>
    <scope>NOMENCLATURE</scope>
</reference>
<keyword id="KW-0025">Alternative splicing</keyword>
<keyword id="KW-1185">Reference proteome</keyword>
<keyword id="KW-0687">Ribonucleoprotein</keyword>
<keyword id="KW-0689">Ribosomal protein</keyword>
<sequence length="108" mass="12053">MAPKKDKVPPPSSKPAKSGGGKQKKKKWSKGKQKEKVNNMVLFDQATYDKLLTEAPKFKLITPSILSDRMRINGSLARRAIRELMAKGVIRMVAAHSSQQIYTRATNT</sequence>
<name>RS254_ARATH</name>
<feature type="chain" id="PRO_0000192883" description="Small ribosomal subunit protein eS25w">
    <location>
        <begin position="1"/>
        <end position="108"/>
    </location>
</feature>
<feature type="region of interest" description="Disordered" evidence="1">
    <location>
        <begin position="1"/>
        <end position="36"/>
    </location>
</feature>
<feature type="compositionally biased region" description="Basic residues" evidence="1">
    <location>
        <begin position="22"/>
        <end position="31"/>
    </location>
</feature>
<evidence type="ECO:0000256" key="1">
    <source>
        <dbReference type="SAM" id="MobiDB-lite"/>
    </source>
</evidence>
<evidence type="ECO:0000303" key="2">
    <source>
    </source>
</evidence>
<evidence type="ECO:0000305" key="3"/>
<dbReference type="EMBL" id="AL050351">
    <property type="protein sequence ID" value="CAB43635.1"/>
    <property type="molecule type" value="Genomic_DNA"/>
</dbReference>
<dbReference type="EMBL" id="AL161594">
    <property type="protein sequence ID" value="CAB80583.1"/>
    <property type="molecule type" value="Genomic_DNA"/>
</dbReference>
<dbReference type="EMBL" id="CP002687">
    <property type="protein sequence ID" value="AEE87036.1"/>
    <property type="molecule type" value="Genomic_DNA"/>
</dbReference>
<dbReference type="EMBL" id="AY037192">
    <property type="protein sequence ID" value="AAK59777.1"/>
    <property type="molecule type" value="mRNA"/>
</dbReference>
<dbReference type="EMBL" id="AY057720">
    <property type="protein sequence ID" value="AAL15350.1"/>
    <property type="molecule type" value="mRNA"/>
</dbReference>
<dbReference type="EMBL" id="AY085575">
    <property type="protein sequence ID" value="AAM62797.1"/>
    <property type="molecule type" value="mRNA"/>
</dbReference>
<dbReference type="PIR" id="T08568">
    <property type="entry name" value="T08568"/>
</dbReference>
<dbReference type="RefSeq" id="NP_195631.1">
    <molecule id="Q9T029-1"/>
    <property type="nucleotide sequence ID" value="NM_120080.4"/>
</dbReference>
<dbReference type="SMR" id="Q9T029"/>
<dbReference type="BioGRID" id="15355">
    <property type="interactions" value="15"/>
</dbReference>
<dbReference type="FunCoup" id="Q9T029">
    <property type="interactions" value="3479"/>
</dbReference>
<dbReference type="STRING" id="3702.Q9T029"/>
<dbReference type="iPTMnet" id="Q9T029"/>
<dbReference type="MetOSite" id="Q9T029"/>
<dbReference type="PaxDb" id="3702-AT4G39200.1"/>
<dbReference type="EnsemblPlants" id="AT4G39200.1">
    <molecule id="Q9T029-1"/>
    <property type="protein sequence ID" value="AT4G39200.1"/>
    <property type="gene ID" value="AT4G39200"/>
</dbReference>
<dbReference type="GeneID" id="830075"/>
<dbReference type="Gramene" id="AT4G39200.1">
    <molecule id="Q9T029-1"/>
    <property type="protein sequence ID" value="AT4G39200.1"/>
    <property type="gene ID" value="AT4G39200"/>
</dbReference>
<dbReference type="KEGG" id="ath:AT4G39200"/>
<dbReference type="Araport" id="AT4G39200"/>
<dbReference type="TAIR" id="AT4G39200"/>
<dbReference type="eggNOG" id="KOG1767">
    <property type="taxonomic scope" value="Eukaryota"/>
</dbReference>
<dbReference type="HOGENOM" id="CLU_129470_0_1_1"/>
<dbReference type="InParanoid" id="Q9T029"/>
<dbReference type="OrthoDB" id="1107711at2759"/>
<dbReference type="PhylomeDB" id="Q9T029"/>
<dbReference type="CD-CODE" id="4299E36E">
    <property type="entry name" value="Nucleolus"/>
</dbReference>
<dbReference type="PRO" id="PR:Q9T029"/>
<dbReference type="Proteomes" id="UP000006548">
    <property type="component" value="Chromosome 4"/>
</dbReference>
<dbReference type="ExpressionAtlas" id="Q9T029">
    <property type="expression patterns" value="baseline and differential"/>
</dbReference>
<dbReference type="GO" id="GO:0022626">
    <property type="term" value="C:cytosolic ribosome"/>
    <property type="evidence" value="ECO:0007005"/>
    <property type="project" value="TAIR"/>
</dbReference>
<dbReference type="GO" id="GO:0022627">
    <property type="term" value="C:cytosolic small ribosomal subunit"/>
    <property type="evidence" value="ECO:0007005"/>
    <property type="project" value="TAIR"/>
</dbReference>
<dbReference type="GO" id="GO:0005886">
    <property type="term" value="C:plasma membrane"/>
    <property type="evidence" value="ECO:0007005"/>
    <property type="project" value="TAIR"/>
</dbReference>
<dbReference type="GO" id="GO:0003729">
    <property type="term" value="F:mRNA binding"/>
    <property type="evidence" value="ECO:0000314"/>
    <property type="project" value="TAIR"/>
</dbReference>
<dbReference type="GO" id="GO:0003735">
    <property type="term" value="F:structural constituent of ribosome"/>
    <property type="evidence" value="ECO:0000314"/>
    <property type="project" value="CAFA"/>
</dbReference>
<dbReference type="FunFam" id="3.30.63.20:FF:000001">
    <property type="entry name" value="40S ribosomal protein S25"/>
    <property type="match status" value="1"/>
</dbReference>
<dbReference type="Gene3D" id="3.30.63.20">
    <property type="match status" value="1"/>
</dbReference>
<dbReference type="InterPro" id="IPR004977">
    <property type="entry name" value="Ribosomal_eS25"/>
</dbReference>
<dbReference type="PANTHER" id="PTHR12850">
    <property type="entry name" value="40S RIBOSOMAL PROTEIN S25"/>
    <property type="match status" value="1"/>
</dbReference>
<dbReference type="Pfam" id="PF03297">
    <property type="entry name" value="Ribosomal_S25"/>
    <property type="match status" value="1"/>
</dbReference>